<accession>Q8WB03</accession>
<comment type="function">
    <text evidence="2">Component of the ubiquinol-cytochrome c reductase complex (complex III or cytochrome b-c1 complex) that is part of the mitochondrial respiratory chain. The b-c1 complex mediates electron transfer from ubiquinol to cytochrome c. Contributes to the generation of a proton gradient across the mitochondrial membrane that is then used for ATP synthesis.</text>
</comment>
<comment type="cofactor">
    <cofactor evidence="2">
        <name>heme b</name>
        <dbReference type="ChEBI" id="CHEBI:60344"/>
    </cofactor>
    <text evidence="2">Binds 2 heme b groups non-covalently.</text>
</comment>
<comment type="subunit">
    <text evidence="2">The cytochrome bc1 complex contains 3 respiratory subunits (MT-CYB, CYC1 and UQCRFS1), 2 core proteins (UQCRC1 and UQCRC2) and probably 6 low-molecular weight proteins.</text>
</comment>
<comment type="subcellular location">
    <subcellularLocation>
        <location evidence="2">Mitochondrion inner membrane</location>
        <topology evidence="2">Multi-pass membrane protein</topology>
    </subcellularLocation>
</comment>
<comment type="miscellaneous">
    <text evidence="1">Heme 1 (or BL or b562) is low-potential and absorbs at about 562 nm, and heme 2 (or BH or b566) is high-potential and absorbs at about 566 nm.</text>
</comment>
<comment type="similarity">
    <text evidence="3 4">Belongs to the cytochrome b family.</text>
</comment>
<comment type="caution">
    <text evidence="2">The full-length protein contains only eight transmembrane helices, not nine as predicted by bioinformatics tools.</text>
</comment>
<geneLocation type="mitochondrion"/>
<dbReference type="EMBL" id="AJ252186">
    <property type="protein sequence ID" value="CAC81029.1"/>
    <property type="molecule type" value="Genomic_DNA"/>
</dbReference>
<dbReference type="SMR" id="Q8WB03"/>
<dbReference type="GO" id="GO:0005743">
    <property type="term" value="C:mitochondrial inner membrane"/>
    <property type="evidence" value="ECO:0007669"/>
    <property type="project" value="UniProtKB-SubCell"/>
</dbReference>
<dbReference type="GO" id="GO:0045275">
    <property type="term" value="C:respiratory chain complex III"/>
    <property type="evidence" value="ECO:0007669"/>
    <property type="project" value="InterPro"/>
</dbReference>
<dbReference type="GO" id="GO:0046872">
    <property type="term" value="F:metal ion binding"/>
    <property type="evidence" value="ECO:0007669"/>
    <property type="project" value="UniProtKB-KW"/>
</dbReference>
<dbReference type="GO" id="GO:0008121">
    <property type="term" value="F:ubiquinol-cytochrome-c reductase activity"/>
    <property type="evidence" value="ECO:0007669"/>
    <property type="project" value="InterPro"/>
</dbReference>
<dbReference type="GO" id="GO:0006122">
    <property type="term" value="P:mitochondrial electron transport, ubiquinol to cytochrome c"/>
    <property type="evidence" value="ECO:0007669"/>
    <property type="project" value="TreeGrafter"/>
</dbReference>
<dbReference type="CDD" id="cd00290">
    <property type="entry name" value="cytochrome_b_C"/>
    <property type="match status" value="1"/>
</dbReference>
<dbReference type="CDD" id="cd00284">
    <property type="entry name" value="Cytochrome_b_N"/>
    <property type="match status" value="1"/>
</dbReference>
<dbReference type="FunFam" id="1.20.810.10:FF:000002">
    <property type="entry name" value="Cytochrome b"/>
    <property type="match status" value="1"/>
</dbReference>
<dbReference type="Gene3D" id="1.20.810.10">
    <property type="entry name" value="Cytochrome Bc1 Complex, Chain C"/>
    <property type="match status" value="1"/>
</dbReference>
<dbReference type="InterPro" id="IPR005798">
    <property type="entry name" value="Cyt_b/b6_C"/>
</dbReference>
<dbReference type="InterPro" id="IPR036150">
    <property type="entry name" value="Cyt_b/b6_C_sf"/>
</dbReference>
<dbReference type="InterPro" id="IPR005797">
    <property type="entry name" value="Cyt_b/b6_N"/>
</dbReference>
<dbReference type="InterPro" id="IPR027387">
    <property type="entry name" value="Cytb/b6-like_sf"/>
</dbReference>
<dbReference type="InterPro" id="IPR030689">
    <property type="entry name" value="Cytochrome_b"/>
</dbReference>
<dbReference type="InterPro" id="IPR048260">
    <property type="entry name" value="Cytochrome_b_C_euk/bac"/>
</dbReference>
<dbReference type="InterPro" id="IPR048259">
    <property type="entry name" value="Cytochrome_b_N_euk/bac"/>
</dbReference>
<dbReference type="InterPro" id="IPR016174">
    <property type="entry name" value="Di-haem_cyt_TM"/>
</dbReference>
<dbReference type="PANTHER" id="PTHR19271">
    <property type="entry name" value="CYTOCHROME B"/>
    <property type="match status" value="1"/>
</dbReference>
<dbReference type="PANTHER" id="PTHR19271:SF16">
    <property type="entry name" value="CYTOCHROME B"/>
    <property type="match status" value="1"/>
</dbReference>
<dbReference type="Pfam" id="PF00032">
    <property type="entry name" value="Cytochrom_B_C"/>
    <property type="match status" value="1"/>
</dbReference>
<dbReference type="Pfam" id="PF00033">
    <property type="entry name" value="Cytochrome_B"/>
    <property type="match status" value="1"/>
</dbReference>
<dbReference type="PIRSF" id="PIRSF038885">
    <property type="entry name" value="COB"/>
    <property type="match status" value="1"/>
</dbReference>
<dbReference type="SUPFAM" id="SSF81648">
    <property type="entry name" value="a domain/subunit of cytochrome bc1 complex (Ubiquinol-cytochrome c reductase)"/>
    <property type="match status" value="1"/>
</dbReference>
<dbReference type="SUPFAM" id="SSF81342">
    <property type="entry name" value="Transmembrane di-heme cytochromes"/>
    <property type="match status" value="1"/>
</dbReference>
<dbReference type="PROSITE" id="PS51003">
    <property type="entry name" value="CYTB_CTER"/>
    <property type="match status" value="1"/>
</dbReference>
<dbReference type="PROSITE" id="PS51002">
    <property type="entry name" value="CYTB_NTER"/>
    <property type="match status" value="1"/>
</dbReference>
<keyword id="KW-0249">Electron transport</keyword>
<keyword id="KW-0349">Heme</keyword>
<keyword id="KW-0408">Iron</keyword>
<keyword id="KW-0472">Membrane</keyword>
<keyword id="KW-0479">Metal-binding</keyword>
<keyword id="KW-0496">Mitochondrion</keyword>
<keyword id="KW-0999">Mitochondrion inner membrane</keyword>
<keyword id="KW-0679">Respiratory chain</keyword>
<keyword id="KW-0812">Transmembrane</keyword>
<keyword id="KW-1133">Transmembrane helix</keyword>
<keyword id="KW-0813">Transport</keyword>
<keyword id="KW-0830">Ubiquinone</keyword>
<name>CYB_ACISI</name>
<sequence length="380" mass="42472">MANIRKTHPLLKIINGAFIDLPTPSNISVWWNFGSLLGLCLVTQILTGLFLAMHYTADISTAFSSVAHICRDVNYGWLIRNIHANGASFFFICLYLHVARGMYYGSYLQKETWNIGVILLLLTMMTAFVGYVLPWGQMSFWGATVITNLLSAFPYIGDTLVQWIWGGFSVDNGTLTRFFAFHFLLPFVIAGASMIHLLVLHQTGSNNPTGLNSDADKVTFHPYFSYKDLFGFILMLVGLTSVALFSPNLLGDPDNFTPANPLVTPPHIKPEWYFLFAYAILRSIPNKLGGVLALLFSILVLMLVPMLHTSKQRGNTFRPPSQILFWALVADMLVLTWIGGQPVEHPFVLIGQVASTIYFALFLIALPLTGWLENKALNWN</sequence>
<feature type="chain" id="PRO_0000060525" description="Cytochrome b">
    <location>
        <begin position="1"/>
        <end position="380"/>
    </location>
</feature>
<feature type="transmembrane region" description="Helical" evidence="2">
    <location>
        <begin position="33"/>
        <end position="53"/>
    </location>
</feature>
<feature type="transmembrane region" description="Helical" evidence="2">
    <location>
        <begin position="77"/>
        <end position="98"/>
    </location>
</feature>
<feature type="transmembrane region" description="Helical" evidence="2">
    <location>
        <begin position="113"/>
        <end position="133"/>
    </location>
</feature>
<feature type="transmembrane region" description="Helical" evidence="2">
    <location>
        <begin position="178"/>
        <end position="198"/>
    </location>
</feature>
<feature type="transmembrane region" description="Helical" evidence="2">
    <location>
        <begin position="226"/>
        <end position="246"/>
    </location>
</feature>
<feature type="transmembrane region" description="Helical" evidence="2">
    <location>
        <begin position="288"/>
        <end position="308"/>
    </location>
</feature>
<feature type="transmembrane region" description="Helical" evidence="2">
    <location>
        <begin position="320"/>
        <end position="340"/>
    </location>
</feature>
<feature type="transmembrane region" description="Helical" evidence="2">
    <location>
        <begin position="347"/>
        <end position="367"/>
    </location>
</feature>
<feature type="binding site" description="axial binding residue" evidence="2">
    <location>
        <position position="83"/>
    </location>
    <ligand>
        <name>heme b</name>
        <dbReference type="ChEBI" id="CHEBI:60344"/>
        <label>b562</label>
    </ligand>
    <ligandPart>
        <name>Fe</name>
        <dbReference type="ChEBI" id="CHEBI:18248"/>
    </ligandPart>
</feature>
<feature type="binding site" description="axial binding residue" evidence="2">
    <location>
        <position position="97"/>
    </location>
    <ligand>
        <name>heme b</name>
        <dbReference type="ChEBI" id="CHEBI:60344"/>
        <label>b566</label>
    </ligand>
    <ligandPart>
        <name>Fe</name>
        <dbReference type="ChEBI" id="CHEBI:18248"/>
    </ligandPart>
</feature>
<feature type="binding site" description="axial binding residue" evidence="2">
    <location>
        <position position="182"/>
    </location>
    <ligand>
        <name>heme b</name>
        <dbReference type="ChEBI" id="CHEBI:60344"/>
        <label>b562</label>
    </ligand>
    <ligandPart>
        <name>Fe</name>
        <dbReference type="ChEBI" id="CHEBI:18248"/>
    </ligandPart>
</feature>
<feature type="binding site" description="axial binding residue" evidence="2">
    <location>
        <position position="196"/>
    </location>
    <ligand>
        <name>heme b</name>
        <dbReference type="ChEBI" id="CHEBI:60344"/>
        <label>b566</label>
    </ligand>
    <ligandPart>
        <name>Fe</name>
        <dbReference type="ChEBI" id="CHEBI:18248"/>
    </ligandPart>
</feature>
<feature type="binding site" evidence="2">
    <location>
        <position position="201"/>
    </location>
    <ligand>
        <name>a ubiquinone</name>
        <dbReference type="ChEBI" id="CHEBI:16389"/>
    </ligand>
</feature>
<organism>
    <name type="scientific">Acipenser sinensis</name>
    <name type="common">Chinese sturgeon</name>
    <dbReference type="NCBI Taxonomy" id="61970"/>
    <lineage>
        <taxon>Eukaryota</taxon>
        <taxon>Metazoa</taxon>
        <taxon>Chordata</taxon>
        <taxon>Craniata</taxon>
        <taxon>Vertebrata</taxon>
        <taxon>Euteleostomi</taxon>
        <taxon>Actinopterygii</taxon>
        <taxon>Chondrostei</taxon>
        <taxon>Acipenseriformes</taxon>
        <taxon>Acipenseridae</taxon>
        <taxon>Acipenser</taxon>
    </lineage>
</organism>
<protein>
    <recommendedName>
        <fullName>Cytochrome b</fullName>
    </recommendedName>
    <alternativeName>
        <fullName>Complex III subunit 3</fullName>
    </alternativeName>
    <alternativeName>
        <fullName>Complex III subunit III</fullName>
    </alternativeName>
    <alternativeName>
        <fullName>Cytochrome b-c1 complex subunit 3</fullName>
    </alternativeName>
    <alternativeName>
        <fullName>Ubiquinol-cytochrome-c reductase complex cytochrome b subunit</fullName>
    </alternativeName>
</protein>
<proteinExistence type="inferred from homology"/>
<evidence type="ECO:0000250" key="1"/>
<evidence type="ECO:0000250" key="2">
    <source>
        <dbReference type="UniProtKB" id="P00157"/>
    </source>
</evidence>
<evidence type="ECO:0000255" key="3">
    <source>
        <dbReference type="PROSITE-ProRule" id="PRU00967"/>
    </source>
</evidence>
<evidence type="ECO:0000255" key="4">
    <source>
        <dbReference type="PROSITE-ProRule" id="PRU00968"/>
    </source>
</evidence>
<gene>
    <name type="primary">mt-cyb</name>
    <name type="synonym">cob</name>
    <name type="synonym">cytb</name>
    <name type="synonym">mtcyb</name>
</gene>
<reference key="1">
    <citation type="submission" date="2000-01" db="EMBL/GenBank/DDBJ databases">
        <title>Molecular phylogeny of the genus Acipenser.</title>
        <authorList>
            <person name="Ludwig A."/>
            <person name="Jenneckens I."/>
        </authorList>
    </citation>
    <scope>NUCLEOTIDE SEQUENCE [GENOMIC DNA]</scope>
</reference>